<comment type="function">
    <text evidence="1">Potent antimicrobial peptide with activity against bacteria, fungi and protozoa. Probably acts by disturbing membrane functions with its amphipathic structure.</text>
</comment>
<comment type="subcellular location">
    <subcellularLocation>
        <location evidence="3">Secreted</location>
    </subcellularLocation>
</comment>
<comment type="tissue specificity">
    <text evidence="7">Expressed by the skin glands.</text>
</comment>
<comment type="similarity">
    <text evidence="6">Belongs to the frog skin active peptide (FSAP) family. Dermaseptin subfamily.</text>
</comment>
<comment type="online information" name="The antimicrobial peptide database">
    <link uri="https://wangapd3.com/database/query_output.php?ID=0935"/>
</comment>
<organism>
    <name type="scientific">Phyllomedusa sauvagei</name>
    <name type="common">Sauvage's leaf frog</name>
    <dbReference type="NCBI Taxonomy" id="8395"/>
    <lineage>
        <taxon>Eukaryota</taxon>
        <taxon>Metazoa</taxon>
        <taxon>Chordata</taxon>
        <taxon>Craniata</taxon>
        <taxon>Vertebrata</taxon>
        <taxon>Euteleostomi</taxon>
        <taxon>Amphibia</taxon>
        <taxon>Batrachia</taxon>
        <taxon>Anura</taxon>
        <taxon>Neobatrachia</taxon>
        <taxon>Hyloidea</taxon>
        <taxon>Hylidae</taxon>
        <taxon>Phyllomedusinae</taxon>
        <taxon>Phyllomedusa</taxon>
    </lineage>
</organism>
<keyword id="KW-0027">Amidation</keyword>
<keyword id="KW-0878">Amphibian defense peptide</keyword>
<keyword id="KW-0044">Antibiotic</keyword>
<keyword id="KW-0929">Antimicrobial</keyword>
<keyword id="KW-0165">Cleavage on pair of basic residues</keyword>
<keyword id="KW-0175">Coiled coil</keyword>
<keyword id="KW-0903">Direct protein sequencing</keyword>
<keyword id="KW-0391">Immunity</keyword>
<keyword id="KW-0399">Innate immunity</keyword>
<keyword id="KW-0964">Secreted</keyword>
<keyword id="KW-0732">Signal</keyword>
<sequence>MDILKKSLFLVLFLGLVSLSICEEEKRENEDEEKQEDDEQSEMKRALWKTMLKKLGTVALHAGKAALGAAADTISQGAQ</sequence>
<proteinExistence type="evidence at protein level"/>
<accession>Q7T3K7</accession>
<dbReference type="EMBL" id="AJ564793">
    <property type="protein sequence ID" value="CAD92231.1"/>
    <property type="molecule type" value="mRNA"/>
</dbReference>
<dbReference type="GO" id="GO:0005576">
    <property type="term" value="C:extracellular region"/>
    <property type="evidence" value="ECO:0007669"/>
    <property type="project" value="UniProtKB-SubCell"/>
</dbReference>
<dbReference type="GO" id="GO:0042742">
    <property type="term" value="P:defense response to bacterium"/>
    <property type="evidence" value="ECO:0007669"/>
    <property type="project" value="UniProtKB-KW"/>
</dbReference>
<dbReference type="GO" id="GO:0045087">
    <property type="term" value="P:innate immune response"/>
    <property type="evidence" value="ECO:0007669"/>
    <property type="project" value="UniProtKB-KW"/>
</dbReference>
<dbReference type="InterPro" id="IPR022731">
    <property type="entry name" value="Dermaseptin_dom"/>
</dbReference>
<dbReference type="InterPro" id="IPR004275">
    <property type="entry name" value="Frog_antimicrobial_propeptide"/>
</dbReference>
<dbReference type="InterPro" id="IPR016322">
    <property type="entry name" value="FSAP"/>
</dbReference>
<dbReference type="Pfam" id="PF12121">
    <property type="entry name" value="DD_K"/>
    <property type="match status" value="1"/>
</dbReference>
<dbReference type="Pfam" id="PF03032">
    <property type="entry name" value="FSAP_sig_propep"/>
    <property type="match status" value="1"/>
</dbReference>
<dbReference type="PIRSF" id="PIRSF001822">
    <property type="entry name" value="Dermaseptin_precursor"/>
    <property type="match status" value="1"/>
</dbReference>
<reference key="1">
    <citation type="journal article" date="2003" name="Regul. Pept.">
        <title>Identification of three novel Phyllomedusa sauvagei dermaseptins (sVI-sVIII) by cloning from a skin secretion-derived cDNA library.</title>
        <authorList>
            <person name="Chen T."/>
            <person name="Tang L."/>
            <person name="Shaw C."/>
        </authorList>
    </citation>
    <scope>NUCLEOTIDE SEQUENCE [MRNA]</scope>
    <scope>PROTEIN SEQUENCE OF 46-76</scope>
    <scope>AMIDATION AT GLN-76</scope>
    <scope>SUBCELLULAR LOCATION</scope>
    <source>
        <tissue>Skin</tissue>
    </source>
</reference>
<reference key="2">
    <citation type="journal article" date="2008" name="Peptides">
        <title>A consistent nomenclature of antimicrobial peptides isolated from frogs of the subfamily Phyllomedusinae.</title>
        <authorList>
            <person name="Amiche M."/>
            <person name="Ladram A."/>
            <person name="Nicolas P."/>
        </authorList>
    </citation>
    <scope>NOMENCLATURE</scope>
</reference>
<feature type="signal peptide" evidence="2">
    <location>
        <begin position="1"/>
        <end position="22"/>
    </location>
</feature>
<feature type="propeptide" id="PRO_0000449587" evidence="3">
    <location>
        <begin position="23"/>
        <end position="45"/>
    </location>
</feature>
<feature type="chain" id="PRO_5004291442" description="Dermaseptin-S8" evidence="3">
    <location>
        <begin position="46"/>
        <end position="76"/>
    </location>
</feature>
<feature type="propeptide" id="PRO_0000449588" evidence="3">
    <location>
        <begin position="78"/>
        <end position="79"/>
    </location>
</feature>
<feature type="modified residue" description="Glutamine amide" evidence="3">
    <location>
        <position position="76"/>
    </location>
</feature>
<evidence type="ECO:0000250" key="1">
    <source>
        <dbReference type="UniProtKB" id="P24302"/>
    </source>
</evidence>
<evidence type="ECO:0000255" key="2"/>
<evidence type="ECO:0000269" key="3">
    <source>
    </source>
</evidence>
<evidence type="ECO:0000303" key="4">
    <source>
    </source>
</evidence>
<evidence type="ECO:0000303" key="5">
    <source>
    </source>
</evidence>
<evidence type="ECO:0000305" key="6"/>
<evidence type="ECO:0000305" key="7">
    <source>
    </source>
</evidence>
<name>DRS8_PHYSA</name>
<protein>
    <recommendedName>
        <fullName evidence="5">Dermaseptin-S8</fullName>
        <shortName evidence="5">DRS-S8</shortName>
    </recommendedName>
    <alternativeName>
        <fullName evidence="4">Dermaseptin DS VIII</fullName>
    </alternativeName>
</protein>